<comment type="function">
    <text evidence="1">Binds as a heterodimer with protein bS6 to the central domain of the 16S rRNA, where it helps stabilize the platform of the 30S subunit.</text>
</comment>
<comment type="subunit">
    <text evidence="1">Part of the 30S ribosomal subunit. Forms a tight heterodimer with protein bS6.</text>
</comment>
<comment type="similarity">
    <text evidence="1">Belongs to the bacterial ribosomal protein bS18 family.</text>
</comment>
<protein>
    <recommendedName>
        <fullName evidence="1">Small ribosomal subunit protein bS18</fullName>
    </recommendedName>
    <alternativeName>
        <fullName evidence="3">30S ribosomal protein S18</fullName>
    </alternativeName>
</protein>
<organism>
    <name type="scientific">Corynebacterium efficiens (strain DSM 44549 / YS-314 / AJ 12310 / JCM 11189 / NBRC 100395)</name>
    <dbReference type="NCBI Taxonomy" id="196164"/>
    <lineage>
        <taxon>Bacteria</taxon>
        <taxon>Bacillati</taxon>
        <taxon>Actinomycetota</taxon>
        <taxon>Actinomycetes</taxon>
        <taxon>Mycobacteriales</taxon>
        <taxon>Corynebacteriaceae</taxon>
        <taxon>Corynebacterium</taxon>
    </lineage>
</organism>
<evidence type="ECO:0000255" key="1">
    <source>
        <dbReference type="HAMAP-Rule" id="MF_00270"/>
    </source>
</evidence>
<evidence type="ECO:0000256" key="2">
    <source>
        <dbReference type="SAM" id="MobiDB-lite"/>
    </source>
</evidence>
<evidence type="ECO:0000305" key="3"/>
<feature type="chain" id="PRO_0000111147" description="Small ribosomal subunit protein bS18">
    <location>
        <begin position="1"/>
        <end position="83"/>
    </location>
</feature>
<feature type="region of interest" description="Disordered" evidence="2">
    <location>
        <begin position="1"/>
        <end position="23"/>
    </location>
</feature>
<keyword id="KW-1185">Reference proteome</keyword>
<keyword id="KW-0687">Ribonucleoprotein</keyword>
<keyword id="KW-0689">Ribosomal protein</keyword>
<keyword id="KW-0694">RNA-binding</keyword>
<keyword id="KW-0699">rRNA-binding</keyword>
<proteinExistence type="inferred from homology"/>
<dbReference type="EMBL" id="BA000035">
    <property type="protein sequence ID" value="BAC17750.1"/>
    <property type="molecule type" value="Genomic_DNA"/>
</dbReference>
<dbReference type="RefSeq" id="WP_003858407.1">
    <property type="nucleotide sequence ID" value="NZ_GG700688.1"/>
</dbReference>
<dbReference type="SMR" id="P66456"/>
<dbReference type="STRING" id="196164.gene:10741346"/>
<dbReference type="GeneID" id="1018860"/>
<dbReference type="KEGG" id="cef:CE0940"/>
<dbReference type="eggNOG" id="COG0238">
    <property type="taxonomic scope" value="Bacteria"/>
</dbReference>
<dbReference type="HOGENOM" id="CLU_148710_1_0_11"/>
<dbReference type="OrthoDB" id="9812008at2"/>
<dbReference type="Proteomes" id="UP000001409">
    <property type="component" value="Chromosome"/>
</dbReference>
<dbReference type="GO" id="GO:0022627">
    <property type="term" value="C:cytosolic small ribosomal subunit"/>
    <property type="evidence" value="ECO:0007669"/>
    <property type="project" value="TreeGrafter"/>
</dbReference>
<dbReference type="GO" id="GO:0070181">
    <property type="term" value="F:small ribosomal subunit rRNA binding"/>
    <property type="evidence" value="ECO:0007669"/>
    <property type="project" value="TreeGrafter"/>
</dbReference>
<dbReference type="GO" id="GO:0003735">
    <property type="term" value="F:structural constituent of ribosome"/>
    <property type="evidence" value="ECO:0007669"/>
    <property type="project" value="InterPro"/>
</dbReference>
<dbReference type="GO" id="GO:0006412">
    <property type="term" value="P:translation"/>
    <property type="evidence" value="ECO:0007669"/>
    <property type="project" value="UniProtKB-UniRule"/>
</dbReference>
<dbReference type="Gene3D" id="4.10.640.10">
    <property type="entry name" value="Ribosomal protein S18"/>
    <property type="match status" value="1"/>
</dbReference>
<dbReference type="HAMAP" id="MF_00270">
    <property type="entry name" value="Ribosomal_bS18"/>
    <property type="match status" value="1"/>
</dbReference>
<dbReference type="InterPro" id="IPR001648">
    <property type="entry name" value="Ribosomal_bS18"/>
</dbReference>
<dbReference type="InterPro" id="IPR018275">
    <property type="entry name" value="Ribosomal_bS18_CS"/>
</dbReference>
<dbReference type="InterPro" id="IPR036870">
    <property type="entry name" value="Ribosomal_bS18_sf"/>
</dbReference>
<dbReference type="NCBIfam" id="TIGR00165">
    <property type="entry name" value="S18"/>
    <property type="match status" value="1"/>
</dbReference>
<dbReference type="PANTHER" id="PTHR13479">
    <property type="entry name" value="30S RIBOSOMAL PROTEIN S18"/>
    <property type="match status" value="1"/>
</dbReference>
<dbReference type="PANTHER" id="PTHR13479:SF40">
    <property type="entry name" value="SMALL RIBOSOMAL SUBUNIT PROTEIN BS18M"/>
    <property type="match status" value="1"/>
</dbReference>
<dbReference type="Pfam" id="PF01084">
    <property type="entry name" value="Ribosomal_S18"/>
    <property type="match status" value="1"/>
</dbReference>
<dbReference type="PRINTS" id="PR00974">
    <property type="entry name" value="RIBOSOMALS18"/>
</dbReference>
<dbReference type="SUPFAM" id="SSF46911">
    <property type="entry name" value="Ribosomal protein S18"/>
    <property type="match status" value="1"/>
</dbReference>
<dbReference type="PROSITE" id="PS00057">
    <property type="entry name" value="RIBOSOMAL_S18"/>
    <property type="match status" value="1"/>
</dbReference>
<gene>
    <name evidence="1" type="primary">rpsR</name>
    <name type="ordered locus">CE0940</name>
</gene>
<sequence length="83" mass="9755">MKQRNNAKRVRLEQTRRPKKNPLKAAGIEKVDYKDINTLRQFISDRHKIRSRRVTGLTPQQQREVATAVKNAREMALLPFTSR</sequence>
<name>RS18_COREF</name>
<accession>P66456</accession>
<accession>Q8NS18</accession>
<reference key="1">
    <citation type="journal article" date="2003" name="Genome Res.">
        <title>Comparative complete genome sequence analysis of the amino acid replacements responsible for the thermostability of Corynebacterium efficiens.</title>
        <authorList>
            <person name="Nishio Y."/>
            <person name="Nakamura Y."/>
            <person name="Kawarabayasi Y."/>
            <person name="Usuda Y."/>
            <person name="Kimura E."/>
            <person name="Sugimoto S."/>
            <person name="Matsui K."/>
            <person name="Yamagishi A."/>
            <person name="Kikuchi H."/>
            <person name="Ikeo K."/>
            <person name="Gojobori T."/>
        </authorList>
    </citation>
    <scope>NUCLEOTIDE SEQUENCE [LARGE SCALE GENOMIC DNA]</scope>
    <source>
        <strain>DSM 44549 / YS-314 / AJ 12310 / JCM 11189 / NBRC 100395</strain>
    </source>
</reference>